<proteinExistence type="evidence at transcript level"/>
<reference key="1">
    <citation type="submission" date="2006-01" db="EMBL/GenBank/DDBJ databases">
        <authorList>
            <consortium name="NIH - Mammalian Gene Collection (MGC) project"/>
        </authorList>
    </citation>
    <scope>NUCLEOTIDE SEQUENCE [LARGE SCALE MRNA]</scope>
    <source>
        <strain>Hereford</strain>
        <tissue>Hypothalamus</tissue>
    </source>
</reference>
<keyword id="KW-0040">ANK repeat</keyword>
<keyword id="KW-0963">Cytoplasm</keyword>
<keyword id="KW-0206">Cytoskeleton</keyword>
<keyword id="KW-0472">Membrane</keyword>
<keyword id="KW-1185">Reference proteome</keyword>
<keyword id="KW-0677">Repeat</keyword>
<gene>
    <name type="primary">ANKRA2</name>
</gene>
<accession>Q2KI79</accession>
<protein>
    <recommendedName>
        <fullName>Ankyrin repeat family A protein 2</fullName>
    </recommendedName>
</protein>
<feature type="chain" id="PRO_0000247543" description="Ankyrin repeat family A protein 2">
    <location>
        <begin position="1"/>
        <end position="313"/>
    </location>
</feature>
<feature type="repeat" description="ANK 1">
    <location>
        <begin position="148"/>
        <end position="180"/>
    </location>
</feature>
<feature type="repeat" description="ANK 2">
    <location>
        <begin position="181"/>
        <end position="213"/>
    </location>
</feature>
<feature type="repeat" description="ANK 3">
    <location>
        <begin position="214"/>
        <end position="246"/>
    </location>
</feature>
<feature type="repeat" description="ANK 4">
    <location>
        <begin position="247"/>
        <end position="279"/>
    </location>
</feature>
<feature type="repeat" description="ANK 5">
    <location>
        <begin position="280"/>
        <end position="313"/>
    </location>
</feature>
<organism>
    <name type="scientific">Bos taurus</name>
    <name type="common">Bovine</name>
    <dbReference type="NCBI Taxonomy" id="9913"/>
    <lineage>
        <taxon>Eukaryota</taxon>
        <taxon>Metazoa</taxon>
        <taxon>Chordata</taxon>
        <taxon>Craniata</taxon>
        <taxon>Vertebrata</taxon>
        <taxon>Euteleostomi</taxon>
        <taxon>Mammalia</taxon>
        <taxon>Eutheria</taxon>
        <taxon>Laurasiatheria</taxon>
        <taxon>Artiodactyla</taxon>
        <taxon>Ruminantia</taxon>
        <taxon>Pecora</taxon>
        <taxon>Bovidae</taxon>
        <taxon>Bovinae</taxon>
        <taxon>Bos</taxon>
    </lineage>
</organism>
<dbReference type="EMBL" id="BC112737">
    <property type="protein sequence ID" value="AAI12738.1"/>
    <property type="molecule type" value="mRNA"/>
</dbReference>
<dbReference type="RefSeq" id="NP_001039754.1">
    <property type="nucleotide sequence ID" value="NM_001046289.2"/>
</dbReference>
<dbReference type="SMR" id="Q2KI79"/>
<dbReference type="FunCoup" id="Q2KI79">
    <property type="interactions" value="2881"/>
</dbReference>
<dbReference type="STRING" id="9913.ENSBTAP00000024557"/>
<dbReference type="PaxDb" id="9913-ENSBTAP00000024557"/>
<dbReference type="Ensembl" id="ENSBTAT00000024557.4">
    <property type="protein sequence ID" value="ENSBTAP00000024557.3"/>
    <property type="gene ID" value="ENSBTAG00000018452.4"/>
</dbReference>
<dbReference type="GeneID" id="528003"/>
<dbReference type="KEGG" id="bta:528003"/>
<dbReference type="CTD" id="57763"/>
<dbReference type="VEuPathDB" id="HostDB:ENSBTAG00000018452"/>
<dbReference type="VGNC" id="VGNC:25907">
    <property type="gene designation" value="ANKRA2"/>
</dbReference>
<dbReference type="eggNOG" id="KOG0502">
    <property type="taxonomic scope" value="Eukaryota"/>
</dbReference>
<dbReference type="GeneTree" id="ENSGT00940000157156"/>
<dbReference type="HOGENOM" id="CLU_078123_0_0_1"/>
<dbReference type="InParanoid" id="Q2KI79"/>
<dbReference type="OMA" id="FKAECSI"/>
<dbReference type="OrthoDB" id="10251692at2759"/>
<dbReference type="TreeFam" id="TF333112"/>
<dbReference type="Proteomes" id="UP000009136">
    <property type="component" value="Chromosome 20"/>
</dbReference>
<dbReference type="Bgee" id="ENSBTAG00000018452">
    <property type="expression patterns" value="Expressed in oocyte and 102 other cell types or tissues"/>
</dbReference>
<dbReference type="GO" id="GO:1990393">
    <property type="term" value="C:3M complex"/>
    <property type="evidence" value="ECO:0007669"/>
    <property type="project" value="Ensembl"/>
</dbReference>
<dbReference type="GO" id="GO:0005856">
    <property type="term" value="C:cytoskeleton"/>
    <property type="evidence" value="ECO:0007669"/>
    <property type="project" value="UniProtKB-SubCell"/>
</dbReference>
<dbReference type="GO" id="GO:0005829">
    <property type="term" value="C:cytosol"/>
    <property type="evidence" value="ECO:0007669"/>
    <property type="project" value="Ensembl"/>
</dbReference>
<dbReference type="GO" id="GO:0016020">
    <property type="term" value="C:membrane"/>
    <property type="evidence" value="ECO:0007669"/>
    <property type="project" value="UniProtKB-SubCell"/>
</dbReference>
<dbReference type="GO" id="GO:0005634">
    <property type="term" value="C:nucleus"/>
    <property type="evidence" value="ECO:0000318"/>
    <property type="project" value="GO_Central"/>
</dbReference>
<dbReference type="GO" id="GO:0042826">
    <property type="term" value="F:histone deacetylase binding"/>
    <property type="evidence" value="ECO:0000250"/>
    <property type="project" value="UniProtKB"/>
</dbReference>
<dbReference type="GO" id="GO:0050750">
    <property type="term" value="F:low-density lipoprotein particle receptor binding"/>
    <property type="evidence" value="ECO:0007669"/>
    <property type="project" value="Ensembl"/>
</dbReference>
<dbReference type="GO" id="GO:0019901">
    <property type="term" value="F:protein kinase binding"/>
    <property type="evidence" value="ECO:0007669"/>
    <property type="project" value="Ensembl"/>
</dbReference>
<dbReference type="GO" id="GO:0031625">
    <property type="term" value="F:ubiquitin protein ligase binding"/>
    <property type="evidence" value="ECO:0000250"/>
    <property type="project" value="UniProtKB"/>
</dbReference>
<dbReference type="GO" id="GO:0010468">
    <property type="term" value="P:regulation of gene expression"/>
    <property type="evidence" value="ECO:0000318"/>
    <property type="project" value="GO_Central"/>
</dbReference>
<dbReference type="GO" id="GO:0043254">
    <property type="term" value="P:regulation of protein-containing complex assembly"/>
    <property type="evidence" value="ECO:0000250"/>
    <property type="project" value="UniProtKB"/>
</dbReference>
<dbReference type="FunFam" id="1.25.40.20:FF:000031">
    <property type="entry name" value="Ankyrin repeat, family A (RFXANK-like), 2"/>
    <property type="match status" value="1"/>
</dbReference>
<dbReference type="Gene3D" id="1.25.40.20">
    <property type="entry name" value="Ankyrin repeat-containing domain"/>
    <property type="match status" value="1"/>
</dbReference>
<dbReference type="InterPro" id="IPR002110">
    <property type="entry name" value="Ankyrin_rpt"/>
</dbReference>
<dbReference type="InterPro" id="IPR036770">
    <property type="entry name" value="Ankyrin_rpt-contain_sf"/>
</dbReference>
<dbReference type="PANTHER" id="PTHR24124">
    <property type="entry name" value="ANKYRIN REPEAT FAMILY A"/>
    <property type="match status" value="1"/>
</dbReference>
<dbReference type="PANTHER" id="PTHR24124:SF3">
    <property type="entry name" value="ANKYRIN REPEAT FAMILY A PROTEIN 2"/>
    <property type="match status" value="1"/>
</dbReference>
<dbReference type="Pfam" id="PF00023">
    <property type="entry name" value="Ank"/>
    <property type="match status" value="1"/>
</dbReference>
<dbReference type="Pfam" id="PF12796">
    <property type="entry name" value="Ank_2"/>
    <property type="match status" value="1"/>
</dbReference>
<dbReference type="PRINTS" id="PR01415">
    <property type="entry name" value="ANKYRIN"/>
</dbReference>
<dbReference type="SMART" id="SM00248">
    <property type="entry name" value="ANK"/>
    <property type="match status" value="3"/>
</dbReference>
<dbReference type="SUPFAM" id="SSF48403">
    <property type="entry name" value="Ankyrin repeat"/>
    <property type="match status" value="1"/>
</dbReference>
<dbReference type="PROSITE" id="PS50297">
    <property type="entry name" value="ANK_REP_REGION"/>
    <property type="match status" value="1"/>
</dbReference>
<dbReference type="PROSITE" id="PS50088">
    <property type="entry name" value="ANK_REPEAT"/>
    <property type="match status" value="3"/>
</dbReference>
<evidence type="ECO:0000250" key="1">
    <source>
        <dbReference type="UniProtKB" id="A2ARV4"/>
    </source>
</evidence>
<evidence type="ECO:0000250" key="2">
    <source>
        <dbReference type="UniProtKB" id="Q99PE2"/>
    </source>
</evidence>
<evidence type="ECO:0000250" key="3">
    <source>
        <dbReference type="UniProtKB" id="Q9H9E1"/>
    </source>
</evidence>
<comment type="function">
    <text evidence="1 3">May regulate the interaction between the 3M complex and the histone deacetylases HDAC4 and HDAC5 (By similarity). May also regulate LRP2/megalin (By similarity).</text>
</comment>
<comment type="subunit">
    <text evidence="2 3">Interacts (via ANK repeats) with CCDC8 (via PxLPxI/L motif); mediates the interaction with the 3M complex which is composed of CCDC8, CUL7 and OBSL1. Interacts (via ANK repeats) with HDAC4 (via PxLPxI/L motif). Interacts (via ANK repeats) with HDAC5 (via PxLPxI/L motif). Interacts (via ANK repeats) with LRP2/megalin (via PxLPxI/L motif). Interacts (via ANK repeats) with RFX7 (via PxLPxI/L motif) (By similarity). Interacts with AHRR (By similarity). Interacts with NEK6 (By similarity).</text>
</comment>
<comment type="subcellular location">
    <subcellularLocation>
        <location evidence="2">Cytoplasm</location>
        <location evidence="2">Cytoskeleton</location>
    </subcellularLocation>
    <subcellularLocation>
        <location evidence="2">Membrane</location>
        <topology evidence="2">Peripheral membrane protein</topology>
    </subcellularLocation>
</comment>
<comment type="domain">
    <text evidence="3">The ankyrin repeats, mainly ANK 2, ANK 3 and ANK 4, mediate interaction with a wide array of PxLPxI/L motif-containing proteins including HDAC4 and LRP2. The PxLPxI/L motif of interactors can contain a Ser or a Thr residue in position 2, which phosphorylation prevents the interaction with ANKRA2.</text>
</comment>
<sequence length="313" mass="34159">MATSANLDIGAQLIVEECPSSYSLSGMPDIKIEHQPDSSAEEGSAQGVAMGMKFILPNRFDMNVCSRFVKSLNEEDSKNIQDQVNSDLEVASVLFKAECNIHTSPSPGIQVRHVYTPSTTKHFSPIKQSTTLTNKHRGNEVSTTPLLANSLSVHQLAAQGEMLYLATRIEQENVINHTDEEGFTPLMWAAAHGQIAVVEFLLQNGADPQLLGKGRESALSLACSKGYTDIVKMLLDCGVDVNEYDWNGGTPLLYAVHGNHVKCVKMLLENGADPTIETDSGYNSMDLAVALGYRSVQQVIESHLLKLLQNIKE</sequence>
<name>ANRA2_BOVIN</name>